<accession>Q49XS1</accession>
<comment type="function">
    <text evidence="1">Catalyzes the conversion of 3-deoxy-D-arabino-heptulosonate 7-phosphate (DAHP) to dehydroquinate (DHQ).</text>
</comment>
<comment type="catalytic activity">
    <reaction evidence="1">
        <text>7-phospho-2-dehydro-3-deoxy-D-arabino-heptonate = 3-dehydroquinate + phosphate</text>
        <dbReference type="Rhea" id="RHEA:21968"/>
        <dbReference type="ChEBI" id="CHEBI:32364"/>
        <dbReference type="ChEBI" id="CHEBI:43474"/>
        <dbReference type="ChEBI" id="CHEBI:58394"/>
        <dbReference type="EC" id="4.2.3.4"/>
    </reaction>
</comment>
<comment type="cofactor">
    <cofactor evidence="1">
        <name>Co(2+)</name>
        <dbReference type="ChEBI" id="CHEBI:48828"/>
    </cofactor>
    <cofactor evidence="1">
        <name>Zn(2+)</name>
        <dbReference type="ChEBI" id="CHEBI:29105"/>
    </cofactor>
    <text evidence="1">Binds 1 divalent metal cation per subunit. Can use either Co(2+) or Zn(2+).</text>
</comment>
<comment type="cofactor">
    <cofactor evidence="1">
        <name>NAD(+)</name>
        <dbReference type="ChEBI" id="CHEBI:57540"/>
    </cofactor>
</comment>
<comment type="pathway">
    <text evidence="1">Metabolic intermediate biosynthesis; chorismate biosynthesis; chorismate from D-erythrose 4-phosphate and phosphoenolpyruvate: step 2/7.</text>
</comment>
<comment type="subcellular location">
    <subcellularLocation>
        <location evidence="1">Cytoplasm</location>
    </subcellularLocation>
</comment>
<comment type="similarity">
    <text evidence="1">Belongs to the sugar phosphate cyclases superfamily. Dehydroquinate synthase family.</text>
</comment>
<gene>
    <name evidence="1" type="primary">aroB</name>
    <name type="ordered locus">SSP1279</name>
</gene>
<keyword id="KW-0028">Amino-acid biosynthesis</keyword>
<keyword id="KW-0057">Aromatic amino acid biosynthesis</keyword>
<keyword id="KW-0170">Cobalt</keyword>
<keyword id="KW-0963">Cytoplasm</keyword>
<keyword id="KW-0456">Lyase</keyword>
<keyword id="KW-0479">Metal-binding</keyword>
<keyword id="KW-0520">NAD</keyword>
<keyword id="KW-0547">Nucleotide-binding</keyword>
<keyword id="KW-1185">Reference proteome</keyword>
<keyword id="KW-0862">Zinc</keyword>
<name>AROB_STAS1</name>
<organism>
    <name type="scientific">Staphylococcus saprophyticus subsp. saprophyticus (strain ATCC 15305 / DSM 20229 / NCIMB 8711 / NCTC 7292 / S-41)</name>
    <dbReference type="NCBI Taxonomy" id="342451"/>
    <lineage>
        <taxon>Bacteria</taxon>
        <taxon>Bacillati</taxon>
        <taxon>Bacillota</taxon>
        <taxon>Bacilli</taxon>
        <taxon>Bacillales</taxon>
        <taxon>Staphylococcaceae</taxon>
        <taxon>Staphylococcus</taxon>
    </lineage>
</organism>
<proteinExistence type="inferred from homology"/>
<sequence length="355" mass="40312">MKLETTYKSNNYPIIVEHQAIDHLHQFIKDYEDVVLVVDEHVNHDWHELLDFITSENNAHKLIIPSGETTKTLSFYEKTIESLLAKQLTRDTCLIAIGGGATGDFTGFLAATLLRGVDFIQVPTTILAHDSSVGGKVGINSKHGKNLIGAFYRPKAVIYDLNFLETLPYTEILSGYAEVYKHALLNDITSVNNIEAQYPNEQALASLKDIEYFLYKGIETKLNIIVQDEKESNVRKYLNLGHTFGHAVEYQFKIPHGHAVMIGIIYQFIVSNIILNTHYDISHYIQYLKSLNYPLEVIQSFEFNSLYGLMLKDKKNDQQGVQMVLLNAIGDPQVKHVDKATLSQAFEIFTTHFEK</sequence>
<protein>
    <recommendedName>
        <fullName evidence="1">3-dehydroquinate synthase</fullName>
        <shortName evidence="1">DHQS</shortName>
        <ecNumber evidence="1">4.2.3.4</ecNumber>
    </recommendedName>
</protein>
<reference key="1">
    <citation type="journal article" date="2005" name="Proc. Natl. Acad. Sci. U.S.A.">
        <title>Whole genome sequence of Staphylococcus saprophyticus reveals the pathogenesis of uncomplicated urinary tract infection.</title>
        <authorList>
            <person name="Kuroda M."/>
            <person name="Yamashita A."/>
            <person name="Hirakawa H."/>
            <person name="Kumano M."/>
            <person name="Morikawa K."/>
            <person name="Higashide M."/>
            <person name="Maruyama A."/>
            <person name="Inose Y."/>
            <person name="Matoba K."/>
            <person name="Toh H."/>
            <person name="Kuhara S."/>
            <person name="Hattori M."/>
            <person name="Ohta T."/>
        </authorList>
    </citation>
    <scope>NUCLEOTIDE SEQUENCE [LARGE SCALE GENOMIC DNA]</scope>
    <source>
        <strain>ATCC 15305 / DSM 20229 / NCIMB 8711 / NCTC 7292 / S-41</strain>
    </source>
</reference>
<dbReference type="EC" id="4.2.3.4" evidence="1"/>
<dbReference type="EMBL" id="AP008934">
    <property type="protein sequence ID" value="BAE18424.1"/>
    <property type="molecule type" value="Genomic_DNA"/>
</dbReference>
<dbReference type="RefSeq" id="WP_002483254.1">
    <property type="nucleotide sequence ID" value="NZ_MTGA01000038.1"/>
</dbReference>
<dbReference type="SMR" id="Q49XS1"/>
<dbReference type="GeneID" id="66867509"/>
<dbReference type="KEGG" id="ssp:SSP1279"/>
<dbReference type="eggNOG" id="COG0337">
    <property type="taxonomic scope" value="Bacteria"/>
</dbReference>
<dbReference type="HOGENOM" id="CLU_001201_0_1_9"/>
<dbReference type="OrthoDB" id="9806583at2"/>
<dbReference type="UniPathway" id="UPA00053">
    <property type="reaction ID" value="UER00085"/>
</dbReference>
<dbReference type="Proteomes" id="UP000006371">
    <property type="component" value="Chromosome"/>
</dbReference>
<dbReference type="GO" id="GO:0005737">
    <property type="term" value="C:cytoplasm"/>
    <property type="evidence" value="ECO:0007669"/>
    <property type="project" value="UniProtKB-SubCell"/>
</dbReference>
<dbReference type="GO" id="GO:0003856">
    <property type="term" value="F:3-dehydroquinate synthase activity"/>
    <property type="evidence" value="ECO:0007669"/>
    <property type="project" value="UniProtKB-UniRule"/>
</dbReference>
<dbReference type="GO" id="GO:0046872">
    <property type="term" value="F:metal ion binding"/>
    <property type="evidence" value="ECO:0007669"/>
    <property type="project" value="UniProtKB-KW"/>
</dbReference>
<dbReference type="GO" id="GO:0000166">
    <property type="term" value="F:nucleotide binding"/>
    <property type="evidence" value="ECO:0007669"/>
    <property type="project" value="UniProtKB-KW"/>
</dbReference>
<dbReference type="GO" id="GO:0008652">
    <property type="term" value="P:amino acid biosynthetic process"/>
    <property type="evidence" value="ECO:0007669"/>
    <property type="project" value="UniProtKB-KW"/>
</dbReference>
<dbReference type="GO" id="GO:0009073">
    <property type="term" value="P:aromatic amino acid family biosynthetic process"/>
    <property type="evidence" value="ECO:0007669"/>
    <property type="project" value="UniProtKB-KW"/>
</dbReference>
<dbReference type="GO" id="GO:0009423">
    <property type="term" value="P:chorismate biosynthetic process"/>
    <property type="evidence" value="ECO:0007669"/>
    <property type="project" value="UniProtKB-UniRule"/>
</dbReference>
<dbReference type="CDD" id="cd08195">
    <property type="entry name" value="DHQS"/>
    <property type="match status" value="1"/>
</dbReference>
<dbReference type="FunFam" id="3.40.50.1970:FF:000007">
    <property type="entry name" value="Pentafunctional AROM polypeptide"/>
    <property type="match status" value="1"/>
</dbReference>
<dbReference type="Gene3D" id="3.40.50.1970">
    <property type="match status" value="1"/>
</dbReference>
<dbReference type="Gene3D" id="1.20.1090.10">
    <property type="entry name" value="Dehydroquinate synthase-like - alpha domain"/>
    <property type="match status" value="1"/>
</dbReference>
<dbReference type="HAMAP" id="MF_00110">
    <property type="entry name" value="DHQ_synthase"/>
    <property type="match status" value="1"/>
</dbReference>
<dbReference type="InterPro" id="IPR050071">
    <property type="entry name" value="Dehydroquinate_synthase"/>
</dbReference>
<dbReference type="InterPro" id="IPR016037">
    <property type="entry name" value="DHQ_synth_AroB"/>
</dbReference>
<dbReference type="InterPro" id="IPR030963">
    <property type="entry name" value="DHQ_synth_fam"/>
</dbReference>
<dbReference type="InterPro" id="IPR030960">
    <property type="entry name" value="DHQS/DOIS_N"/>
</dbReference>
<dbReference type="InterPro" id="IPR056179">
    <property type="entry name" value="DHQS_C"/>
</dbReference>
<dbReference type="NCBIfam" id="TIGR01357">
    <property type="entry name" value="aroB"/>
    <property type="match status" value="1"/>
</dbReference>
<dbReference type="PANTHER" id="PTHR43622">
    <property type="entry name" value="3-DEHYDROQUINATE SYNTHASE"/>
    <property type="match status" value="1"/>
</dbReference>
<dbReference type="PANTHER" id="PTHR43622:SF7">
    <property type="entry name" value="3-DEHYDROQUINATE SYNTHASE, CHLOROPLASTIC"/>
    <property type="match status" value="1"/>
</dbReference>
<dbReference type="Pfam" id="PF01761">
    <property type="entry name" value="DHQ_synthase"/>
    <property type="match status" value="1"/>
</dbReference>
<dbReference type="Pfam" id="PF24621">
    <property type="entry name" value="DHQS_C"/>
    <property type="match status" value="1"/>
</dbReference>
<dbReference type="PIRSF" id="PIRSF001455">
    <property type="entry name" value="DHQ_synth"/>
    <property type="match status" value="1"/>
</dbReference>
<dbReference type="SUPFAM" id="SSF56796">
    <property type="entry name" value="Dehydroquinate synthase-like"/>
    <property type="match status" value="1"/>
</dbReference>
<feature type="chain" id="PRO_0000231131" description="3-dehydroquinate synthase">
    <location>
        <begin position="1"/>
        <end position="355"/>
    </location>
</feature>
<feature type="binding site" evidence="1">
    <location>
        <begin position="66"/>
        <end position="71"/>
    </location>
    <ligand>
        <name>NAD(+)</name>
        <dbReference type="ChEBI" id="CHEBI:57540"/>
    </ligand>
</feature>
<feature type="binding site" evidence="1">
    <location>
        <begin position="100"/>
        <end position="104"/>
    </location>
    <ligand>
        <name>NAD(+)</name>
        <dbReference type="ChEBI" id="CHEBI:57540"/>
    </ligand>
</feature>
<feature type="binding site" evidence="1">
    <location>
        <begin position="124"/>
        <end position="125"/>
    </location>
    <ligand>
        <name>NAD(+)</name>
        <dbReference type="ChEBI" id="CHEBI:57540"/>
    </ligand>
</feature>
<feature type="binding site" evidence="1">
    <location>
        <position position="136"/>
    </location>
    <ligand>
        <name>NAD(+)</name>
        <dbReference type="ChEBI" id="CHEBI:57540"/>
    </ligand>
</feature>
<feature type="binding site" evidence="1">
    <location>
        <position position="145"/>
    </location>
    <ligand>
        <name>NAD(+)</name>
        <dbReference type="ChEBI" id="CHEBI:57540"/>
    </ligand>
</feature>
<feature type="binding site" evidence="1">
    <location>
        <begin position="163"/>
        <end position="166"/>
    </location>
    <ligand>
        <name>NAD(+)</name>
        <dbReference type="ChEBI" id="CHEBI:57540"/>
    </ligand>
</feature>
<feature type="binding site" evidence="1">
    <location>
        <position position="178"/>
    </location>
    <ligand>
        <name>Zn(2+)</name>
        <dbReference type="ChEBI" id="CHEBI:29105"/>
    </ligand>
</feature>
<feature type="binding site" evidence="1">
    <location>
        <position position="242"/>
    </location>
    <ligand>
        <name>Zn(2+)</name>
        <dbReference type="ChEBI" id="CHEBI:29105"/>
    </ligand>
</feature>
<feature type="binding site" evidence="1">
    <location>
        <position position="256"/>
    </location>
    <ligand>
        <name>Zn(2+)</name>
        <dbReference type="ChEBI" id="CHEBI:29105"/>
    </ligand>
</feature>
<evidence type="ECO:0000255" key="1">
    <source>
        <dbReference type="HAMAP-Rule" id="MF_00110"/>
    </source>
</evidence>